<comment type="function">
    <text evidence="5 6">Involved in resistance to oxidative stress. Influences responses to reactive oxygen species (ROS) production. Regulates plastoglobules formation in thylakoids. Together with OSA1, regulates iron distribution within the chloroplast and mediates the oxidative stress response (PubMed:24117441). Together with ABC1K8, influences chloroplast lipid synthesis/accumulation and modulates chloroplast membrane composition in response to stress (PubMed:25809944).</text>
</comment>
<comment type="catalytic activity">
    <reaction evidence="1">
        <text>L-seryl-[protein] + ATP = O-phospho-L-seryl-[protein] + ADP + H(+)</text>
        <dbReference type="Rhea" id="RHEA:17989"/>
        <dbReference type="Rhea" id="RHEA-COMP:9863"/>
        <dbReference type="Rhea" id="RHEA-COMP:11604"/>
        <dbReference type="ChEBI" id="CHEBI:15378"/>
        <dbReference type="ChEBI" id="CHEBI:29999"/>
        <dbReference type="ChEBI" id="CHEBI:30616"/>
        <dbReference type="ChEBI" id="CHEBI:83421"/>
        <dbReference type="ChEBI" id="CHEBI:456216"/>
        <dbReference type="EC" id="2.7.11.1"/>
    </reaction>
</comment>
<comment type="catalytic activity">
    <reaction evidence="1">
        <text>L-threonyl-[protein] + ATP = O-phospho-L-threonyl-[protein] + ADP + H(+)</text>
        <dbReference type="Rhea" id="RHEA:46608"/>
        <dbReference type="Rhea" id="RHEA-COMP:11060"/>
        <dbReference type="Rhea" id="RHEA-COMP:11605"/>
        <dbReference type="ChEBI" id="CHEBI:15378"/>
        <dbReference type="ChEBI" id="CHEBI:30013"/>
        <dbReference type="ChEBI" id="CHEBI:30616"/>
        <dbReference type="ChEBI" id="CHEBI:61977"/>
        <dbReference type="ChEBI" id="CHEBI:456216"/>
        <dbReference type="EC" id="2.7.11.1"/>
    </reaction>
</comment>
<comment type="subcellular location">
    <subcellularLocation>
        <location evidence="5">Plastid</location>
        <location evidence="5">Chloroplast thylakoid membrane</location>
        <topology evidence="2">Multi-pass membrane protein</topology>
    </subcellularLocation>
    <subcellularLocation>
        <location evidence="4 10">Plastid</location>
        <location evidence="4 10">Chloroplast</location>
        <location evidence="4 10">Plastoglobule</location>
    </subcellularLocation>
</comment>
<comment type="tissue specificity">
    <text evidence="5">Mostly expressed in leaves and flowers, and, to a lower extent, in roots.</text>
</comment>
<comment type="induction">
    <text evidence="5">Down-regulated in response to iron deprivation.</text>
</comment>
<comment type="disruption phenotype">
    <text evidence="5 6">Larger plastoglobules associated with thylakoids characterized by VTE1 accumulation and high tocopherol content. The pale green double mutant atsia1 atosa1 accumulates ferritin and superoxides, exhibits an increased nonphotochemical quenching (NPQ), and have a reduced tolerance to reactive oxygen species (ROS) (PubMed:24117441). Lower levels of the highly unsaturated lipid digalactosyldiacylglycerol (DGDG) and of different forms of monogalactosyldiacylglycerol (MGDG) and kaempferol. The abc1k7 abc1k8 double mutant accumulates strong levels of oxylipin-conjugated MGDG and DGDG (PubMed:25809944).</text>
</comment>
<comment type="similarity">
    <text evidence="9">Belongs to the protein kinase superfamily. ADCK protein kinase family.</text>
</comment>
<comment type="sequence caution" evidence="9">
    <conflict type="erroneous gene model prediction">
        <sequence resource="EMBL-CDS" id="AAF13088"/>
    </conflict>
</comment>
<comment type="sequence caution" evidence="9">
    <conflict type="erroneous gene model prediction">
        <sequence resource="EMBL-CDS" id="AAF21180"/>
    </conflict>
</comment>
<evidence type="ECO:0000250" key="1">
    <source>
        <dbReference type="UniProtKB" id="Q9MA15"/>
    </source>
</evidence>
<evidence type="ECO:0000255" key="2"/>
<evidence type="ECO:0000255" key="3">
    <source>
        <dbReference type="PROSITE-ProRule" id="PRU00159"/>
    </source>
</evidence>
<evidence type="ECO:0000269" key="4">
    <source>
    </source>
</evidence>
<evidence type="ECO:0000269" key="5">
    <source>
    </source>
</evidence>
<evidence type="ECO:0000269" key="6">
    <source>
    </source>
</evidence>
<evidence type="ECO:0000303" key="7">
    <source>
    </source>
</evidence>
<evidence type="ECO:0000303" key="8">
    <source>
    </source>
</evidence>
<evidence type="ECO:0000305" key="9"/>
<evidence type="ECO:0000305" key="10">
    <source>
    </source>
</evidence>
<evidence type="ECO:0000312" key="11">
    <source>
        <dbReference type="Araport" id="AT3G07700"/>
    </source>
</evidence>
<evidence type="ECO:0000312" key="12">
    <source>
        <dbReference type="EMBL" id="AAF13088.1"/>
    </source>
</evidence>
<evidence type="ECO:0000312" key="13">
    <source>
        <dbReference type="EMBL" id="AAF21180.1"/>
    </source>
</evidence>
<sequence>MAALLASQSCCYGGETARVTKAIGFSSSLENHFTGEATQCYGSKSKRFRIEMRQSELPSKVGINGRSVKMVPASEVVKRKDGVNGSAGKGVNGASLVSSRNINGAASTLVKAPKKTTESYLPPPVEGVRVLPSDEGFSWADENYSSLQRSIDVWSFVISLRIRILFDNSKWAYVGGFTEEKQKSRRRETASWLRESVLQLGPTFIKLGQLSSTRSDLFPREFVDELSKLQDRVPAFSPEKAKRFIEAELGAPISVMYKEFEEQPIAAASLGQVHRAVLHNGEKVVVKVQRPGLKKLFDIDLRNLKLIAEYFQKSESFGTNDWVGIYEECALILYQEIDYINEAKNADRFRRDFRNINWVRVPLVYWDYSAMKVLTLEYVPGVKINNLDALAARGFNRSRIASRAIEAYLIQILKTGFFHADPHPGNLAIDVDESIIYYDFGMMGEIKTFTRKRLLDLFYSVYEKDAKKVMQNLIDLEALQPTGDLSSVRRSVQFFLDNLLSQSPDQQQTLAAIGEDLFAISQDQPFRFPSTFTFVIRAFSTLEGIGYILDPEFSFVKVAAPYAQELLDLKQRQRSGTQLVQEIRKQADDARSSTLSMPYRVQRIEEFVKELDSGDLKLRVRVLESERAARKATILQMATMYTVLGGTLLNIGVTFSNQGSQLVANGSFIGAGIFMLLVLRSMQRVNKLDKFEKMI</sequence>
<proteinExistence type="evidence at protein level"/>
<organism>
    <name type="scientific">Arabidopsis thaliana</name>
    <name type="common">Mouse-ear cress</name>
    <dbReference type="NCBI Taxonomy" id="3702"/>
    <lineage>
        <taxon>Eukaryota</taxon>
        <taxon>Viridiplantae</taxon>
        <taxon>Streptophyta</taxon>
        <taxon>Embryophyta</taxon>
        <taxon>Tracheophyta</taxon>
        <taxon>Spermatophyta</taxon>
        <taxon>Magnoliopsida</taxon>
        <taxon>eudicotyledons</taxon>
        <taxon>Gunneridae</taxon>
        <taxon>Pentapetalae</taxon>
        <taxon>rosids</taxon>
        <taxon>malvids</taxon>
        <taxon>Brassicales</taxon>
        <taxon>Brassicaceae</taxon>
        <taxon>Camelineae</taxon>
        <taxon>Arabidopsis</taxon>
    </lineage>
</organism>
<dbReference type="EC" id="2.7.11.1" evidence="1"/>
<dbReference type="EMBL" id="AC009176">
    <property type="protein sequence ID" value="AAF13088.1"/>
    <property type="status" value="ALT_SEQ"/>
    <property type="molecule type" value="Genomic_DNA"/>
</dbReference>
<dbReference type="EMBL" id="AC013483">
    <property type="protein sequence ID" value="AAF21180.1"/>
    <property type="status" value="ALT_SEQ"/>
    <property type="molecule type" value="Genomic_DNA"/>
</dbReference>
<dbReference type="EMBL" id="CP002686">
    <property type="protein sequence ID" value="AEE74588.1"/>
    <property type="molecule type" value="Genomic_DNA"/>
</dbReference>
<dbReference type="EMBL" id="CP002686">
    <property type="protein sequence ID" value="AEE74589.1"/>
    <property type="molecule type" value="Genomic_DNA"/>
</dbReference>
<dbReference type="EMBL" id="CP002686">
    <property type="protein sequence ID" value="ANM65268.1"/>
    <property type="molecule type" value="Genomic_DNA"/>
</dbReference>
<dbReference type="EMBL" id="AY056806">
    <property type="protein sequence ID" value="AAL10497.1"/>
    <property type="molecule type" value="mRNA"/>
</dbReference>
<dbReference type="EMBL" id="AY080823">
    <property type="protein sequence ID" value="AAL87300.1"/>
    <property type="molecule type" value="mRNA"/>
</dbReference>
<dbReference type="EMBL" id="AK317324">
    <property type="protein sequence ID" value="BAH19998.1"/>
    <property type="molecule type" value="mRNA"/>
</dbReference>
<dbReference type="EMBL" id="AY088788">
    <property type="protein sequence ID" value="AAM67100.1"/>
    <property type="molecule type" value="mRNA"/>
</dbReference>
<dbReference type="RefSeq" id="NP_001319495.1">
    <property type="nucleotide sequence ID" value="NM_001337729.1"/>
</dbReference>
<dbReference type="RefSeq" id="NP_566315.1">
    <property type="nucleotide sequence ID" value="NM_111649.4"/>
</dbReference>
<dbReference type="RefSeq" id="NP_850536.1">
    <property type="nucleotide sequence ID" value="NM_180205.2"/>
</dbReference>
<dbReference type="SMR" id="B9DGY1"/>
<dbReference type="FunCoup" id="B9DGY1">
    <property type="interactions" value="55"/>
</dbReference>
<dbReference type="STRING" id="3702.B9DGY1"/>
<dbReference type="iPTMnet" id="B9DGY1"/>
<dbReference type="PaxDb" id="3702-AT3G07700.3"/>
<dbReference type="ProteomicsDB" id="245121"/>
<dbReference type="EnsemblPlants" id="AT3G07700.1">
    <property type="protein sequence ID" value="AT3G07700.1"/>
    <property type="gene ID" value="AT3G07700"/>
</dbReference>
<dbReference type="EnsemblPlants" id="AT3G07700.2">
    <property type="protein sequence ID" value="AT3G07700.2"/>
    <property type="gene ID" value="AT3G07700"/>
</dbReference>
<dbReference type="EnsemblPlants" id="AT3G07700.4">
    <property type="protein sequence ID" value="AT3G07700.4"/>
    <property type="gene ID" value="AT3G07700"/>
</dbReference>
<dbReference type="GeneID" id="819961"/>
<dbReference type="Gramene" id="AT3G07700.1">
    <property type="protein sequence ID" value="AT3G07700.1"/>
    <property type="gene ID" value="AT3G07700"/>
</dbReference>
<dbReference type="Gramene" id="AT3G07700.2">
    <property type="protein sequence ID" value="AT3G07700.2"/>
    <property type="gene ID" value="AT3G07700"/>
</dbReference>
<dbReference type="Gramene" id="AT3G07700.4">
    <property type="protein sequence ID" value="AT3G07700.4"/>
    <property type="gene ID" value="AT3G07700"/>
</dbReference>
<dbReference type="KEGG" id="ath:AT3G07700"/>
<dbReference type="Araport" id="AT3G07700"/>
<dbReference type="TAIR" id="AT3G07700">
    <property type="gene designation" value="SIA1"/>
</dbReference>
<dbReference type="eggNOG" id="KOG1235">
    <property type="taxonomic scope" value="Eukaryota"/>
</dbReference>
<dbReference type="InParanoid" id="B9DGY1"/>
<dbReference type="OMA" id="VMFDQLF"/>
<dbReference type="OrthoDB" id="427480at2759"/>
<dbReference type="PhylomeDB" id="B9DGY1"/>
<dbReference type="PRO" id="PR:B9DGY1"/>
<dbReference type="Proteomes" id="UP000006548">
    <property type="component" value="Chromosome 3"/>
</dbReference>
<dbReference type="ExpressionAtlas" id="B9DGY1">
    <property type="expression patterns" value="baseline and differential"/>
</dbReference>
<dbReference type="GO" id="GO:0009535">
    <property type="term" value="C:chloroplast thylakoid membrane"/>
    <property type="evidence" value="ECO:0000314"/>
    <property type="project" value="UniProtKB"/>
</dbReference>
<dbReference type="GO" id="GO:0010287">
    <property type="term" value="C:plastoglobule"/>
    <property type="evidence" value="ECO:0000304"/>
    <property type="project" value="UniProtKB"/>
</dbReference>
<dbReference type="GO" id="GO:0005524">
    <property type="term" value="F:ATP binding"/>
    <property type="evidence" value="ECO:0007669"/>
    <property type="project" value="UniProtKB-KW"/>
</dbReference>
<dbReference type="GO" id="GO:0106310">
    <property type="term" value="F:protein serine kinase activity"/>
    <property type="evidence" value="ECO:0007669"/>
    <property type="project" value="RHEA"/>
</dbReference>
<dbReference type="GO" id="GO:0004674">
    <property type="term" value="F:protein serine/threonine kinase activity"/>
    <property type="evidence" value="ECO:0007669"/>
    <property type="project" value="UniProtKB-EC"/>
</dbReference>
<dbReference type="GO" id="GO:0034599">
    <property type="term" value="P:cellular response to oxidative stress"/>
    <property type="evidence" value="ECO:0000315"/>
    <property type="project" value="UniProtKB"/>
</dbReference>
<dbReference type="GO" id="GO:0046467">
    <property type="term" value="P:membrane lipid biosynthetic process"/>
    <property type="evidence" value="ECO:0000315"/>
    <property type="project" value="UniProtKB"/>
</dbReference>
<dbReference type="GO" id="GO:1901031">
    <property type="term" value="P:regulation of response to reactive oxygen species"/>
    <property type="evidence" value="ECO:0000315"/>
    <property type="project" value="UniProtKB"/>
</dbReference>
<dbReference type="GO" id="GO:1990641">
    <property type="term" value="P:response to iron ion starvation"/>
    <property type="evidence" value="ECO:0000270"/>
    <property type="project" value="UniProtKB"/>
</dbReference>
<dbReference type="GO" id="GO:0006979">
    <property type="term" value="P:response to oxidative stress"/>
    <property type="evidence" value="ECO:0000315"/>
    <property type="project" value="UniProtKB"/>
</dbReference>
<dbReference type="CDD" id="cd05121">
    <property type="entry name" value="ABC1_ADCK3-like"/>
    <property type="match status" value="1"/>
</dbReference>
<dbReference type="InterPro" id="IPR004147">
    <property type="entry name" value="ABC1_dom"/>
</dbReference>
<dbReference type="InterPro" id="IPR011009">
    <property type="entry name" value="Kinase-like_dom_sf"/>
</dbReference>
<dbReference type="InterPro" id="IPR050154">
    <property type="entry name" value="UbiB_kinase"/>
</dbReference>
<dbReference type="PANTHER" id="PTHR10566">
    <property type="entry name" value="CHAPERONE-ACTIVITY OF BC1 COMPLEX CABC1 -RELATED"/>
    <property type="match status" value="1"/>
</dbReference>
<dbReference type="PANTHER" id="PTHR10566:SF113">
    <property type="entry name" value="PROTEIN ACTIVITY OF BC1 COMPLEX KINASE 7, CHLOROPLASTIC"/>
    <property type="match status" value="1"/>
</dbReference>
<dbReference type="Pfam" id="PF03109">
    <property type="entry name" value="ABC1"/>
    <property type="match status" value="1"/>
</dbReference>
<dbReference type="SUPFAM" id="SSF56112">
    <property type="entry name" value="Protein kinase-like (PK-like)"/>
    <property type="match status" value="1"/>
</dbReference>
<feature type="transit peptide" description="Chloroplast" evidence="2">
    <location>
        <begin position="1"/>
        <end status="unknown"/>
    </location>
</feature>
<feature type="chain" id="PRO_0000441256" description="Protein ACTIVITY OF BC1 COMPLEX KINASE 7, chloroplastic" evidence="2">
    <location>
        <begin status="unknown"/>
        <end position="695"/>
    </location>
</feature>
<feature type="transmembrane region" description="Helical" evidence="2">
    <location>
        <begin position="633"/>
        <end position="653"/>
    </location>
</feature>
<feature type="transmembrane region" description="Helical" evidence="2">
    <location>
        <begin position="659"/>
        <end position="679"/>
    </location>
</feature>
<feature type="domain" description="Protein kinase" evidence="3">
    <location>
        <begin position="259"/>
        <end position="589"/>
    </location>
</feature>
<feature type="active site" description="Proton acceptor" evidence="3">
    <location>
        <position position="421"/>
    </location>
</feature>
<feature type="binding site" evidence="3">
    <location>
        <begin position="265"/>
        <end position="273"/>
    </location>
    <ligand>
        <name>ATP</name>
        <dbReference type="ChEBI" id="CHEBI:30616"/>
    </ligand>
</feature>
<feature type="binding site" evidence="3">
    <location>
        <position position="287"/>
    </location>
    <ligand>
        <name>ATP</name>
        <dbReference type="ChEBI" id="CHEBI:30616"/>
    </ligand>
</feature>
<feature type="sequence conflict" description="In Ref. 5; AAM67100." evidence="9" ref="5">
    <original>A</original>
    <variation>V</variation>
    <location>
        <position position="2"/>
    </location>
</feature>
<feature type="sequence conflict" description="In Ref. 3; AAL10497." evidence="9" ref="3">
    <original>T</original>
    <variation>I</variation>
    <location>
        <position position="178"/>
    </location>
</feature>
<name>AB1K7_ARATH</name>
<protein>
    <recommendedName>
        <fullName evidence="7">Protein ACTIVITY OF BC1 COMPLEX KINASE 7, chloroplastic</fullName>
        <shortName evidence="7">ABC1-LIKE KINASE 7</shortName>
        <ecNumber evidence="1">2.7.11.1</ecNumber>
    </recommendedName>
    <alternativeName>
        <fullName evidence="8">Salt-induced ABC1 kinase 1, chloroplastic</fullName>
        <shortName evidence="8">AtSIA1</shortName>
    </alternativeName>
</protein>
<reference key="1">
    <citation type="journal article" date="2000" name="Nature">
        <title>Sequence and analysis of chromosome 3 of the plant Arabidopsis thaliana.</title>
        <authorList>
            <person name="Salanoubat M."/>
            <person name="Lemcke K."/>
            <person name="Rieger M."/>
            <person name="Ansorge W."/>
            <person name="Unseld M."/>
            <person name="Fartmann B."/>
            <person name="Valle G."/>
            <person name="Bloecker H."/>
            <person name="Perez-Alonso M."/>
            <person name="Obermaier B."/>
            <person name="Delseny M."/>
            <person name="Boutry M."/>
            <person name="Grivell L.A."/>
            <person name="Mache R."/>
            <person name="Puigdomenech P."/>
            <person name="De Simone V."/>
            <person name="Choisne N."/>
            <person name="Artiguenave F."/>
            <person name="Robert C."/>
            <person name="Brottier P."/>
            <person name="Wincker P."/>
            <person name="Cattolico L."/>
            <person name="Weissenbach J."/>
            <person name="Saurin W."/>
            <person name="Quetier F."/>
            <person name="Schaefer M."/>
            <person name="Mueller-Auer S."/>
            <person name="Gabel C."/>
            <person name="Fuchs M."/>
            <person name="Benes V."/>
            <person name="Wurmbach E."/>
            <person name="Drzonek H."/>
            <person name="Erfle H."/>
            <person name="Jordan N."/>
            <person name="Bangert S."/>
            <person name="Wiedelmann R."/>
            <person name="Kranz H."/>
            <person name="Voss H."/>
            <person name="Holland R."/>
            <person name="Brandt P."/>
            <person name="Nyakatura G."/>
            <person name="Vezzi A."/>
            <person name="D'Angelo M."/>
            <person name="Pallavicini A."/>
            <person name="Toppo S."/>
            <person name="Simionati B."/>
            <person name="Conrad A."/>
            <person name="Hornischer K."/>
            <person name="Kauer G."/>
            <person name="Loehnert T.-H."/>
            <person name="Nordsiek G."/>
            <person name="Reichelt J."/>
            <person name="Scharfe M."/>
            <person name="Schoen O."/>
            <person name="Bargues M."/>
            <person name="Terol J."/>
            <person name="Climent J."/>
            <person name="Navarro P."/>
            <person name="Collado C."/>
            <person name="Perez-Perez A."/>
            <person name="Ottenwaelder B."/>
            <person name="Duchemin D."/>
            <person name="Cooke R."/>
            <person name="Laudie M."/>
            <person name="Berger-Llauro C."/>
            <person name="Purnelle B."/>
            <person name="Masuy D."/>
            <person name="de Haan M."/>
            <person name="Maarse A.C."/>
            <person name="Alcaraz J.-P."/>
            <person name="Cottet A."/>
            <person name="Casacuberta E."/>
            <person name="Monfort A."/>
            <person name="Argiriou A."/>
            <person name="Flores M."/>
            <person name="Liguori R."/>
            <person name="Vitale D."/>
            <person name="Mannhaupt G."/>
            <person name="Haase D."/>
            <person name="Schoof H."/>
            <person name="Rudd S."/>
            <person name="Zaccaria P."/>
            <person name="Mewes H.-W."/>
            <person name="Mayer K.F.X."/>
            <person name="Kaul S."/>
            <person name="Town C.D."/>
            <person name="Koo H.L."/>
            <person name="Tallon L.J."/>
            <person name="Jenkins J."/>
            <person name="Rooney T."/>
            <person name="Rizzo M."/>
            <person name="Walts A."/>
            <person name="Utterback T."/>
            <person name="Fujii C.Y."/>
            <person name="Shea T.P."/>
            <person name="Creasy T.H."/>
            <person name="Haas B."/>
            <person name="Maiti R."/>
            <person name="Wu D."/>
            <person name="Peterson J."/>
            <person name="Van Aken S."/>
            <person name="Pai G."/>
            <person name="Militscher J."/>
            <person name="Sellers P."/>
            <person name="Gill J.E."/>
            <person name="Feldblyum T.V."/>
            <person name="Preuss D."/>
            <person name="Lin X."/>
            <person name="Nierman W.C."/>
            <person name="Salzberg S.L."/>
            <person name="White O."/>
            <person name="Venter J.C."/>
            <person name="Fraser C.M."/>
            <person name="Kaneko T."/>
            <person name="Nakamura Y."/>
            <person name="Sato S."/>
            <person name="Kato T."/>
            <person name="Asamizu E."/>
            <person name="Sasamoto S."/>
            <person name="Kimura T."/>
            <person name="Idesawa K."/>
            <person name="Kawashima K."/>
            <person name="Kishida Y."/>
            <person name="Kiyokawa C."/>
            <person name="Kohara M."/>
            <person name="Matsumoto M."/>
            <person name="Matsuno A."/>
            <person name="Muraki A."/>
            <person name="Nakayama S."/>
            <person name="Nakazaki N."/>
            <person name="Shinpo S."/>
            <person name="Takeuchi C."/>
            <person name="Wada T."/>
            <person name="Watanabe A."/>
            <person name="Yamada M."/>
            <person name="Yasuda M."/>
            <person name="Tabata S."/>
        </authorList>
    </citation>
    <scope>NUCLEOTIDE SEQUENCE [LARGE SCALE GENOMIC DNA]</scope>
    <source>
        <strain>cv. Columbia</strain>
    </source>
</reference>
<reference key="2">
    <citation type="journal article" date="2017" name="Plant J.">
        <title>Araport11: a complete reannotation of the Arabidopsis thaliana reference genome.</title>
        <authorList>
            <person name="Cheng C.Y."/>
            <person name="Krishnakumar V."/>
            <person name="Chan A.P."/>
            <person name="Thibaud-Nissen F."/>
            <person name="Schobel S."/>
            <person name="Town C.D."/>
        </authorList>
    </citation>
    <scope>GENOME REANNOTATION</scope>
    <source>
        <strain>cv. Columbia</strain>
    </source>
</reference>
<reference key="3">
    <citation type="journal article" date="2003" name="Science">
        <title>Empirical analysis of transcriptional activity in the Arabidopsis genome.</title>
        <authorList>
            <person name="Yamada K."/>
            <person name="Lim J."/>
            <person name="Dale J.M."/>
            <person name="Chen H."/>
            <person name="Shinn P."/>
            <person name="Palm C.J."/>
            <person name="Southwick A.M."/>
            <person name="Wu H.C."/>
            <person name="Kim C.J."/>
            <person name="Nguyen M."/>
            <person name="Pham P.K."/>
            <person name="Cheuk R.F."/>
            <person name="Karlin-Newmann G."/>
            <person name="Liu S.X."/>
            <person name="Lam B."/>
            <person name="Sakano H."/>
            <person name="Wu T."/>
            <person name="Yu G."/>
            <person name="Miranda M."/>
            <person name="Quach H.L."/>
            <person name="Tripp M."/>
            <person name="Chang C.H."/>
            <person name="Lee J.M."/>
            <person name="Toriumi M.J."/>
            <person name="Chan M.M."/>
            <person name="Tang C.C."/>
            <person name="Onodera C.S."/>
            <person name="Deng J.M."/>
            <person name="Akiyama K."/>
            <person name="Ansari Y."/>
            <person name="Arakawa T."/>
            <person name="Banh J."/>
            <person name="Banno F."/>
            <person name="Bowser L."/>
            <person name="Brooks S.Y."/>
            <person name="Carninci P."/>
            <person name="Chao Q."/>
            <person name="Choy N."/>
            <person name="Enju A."/>
            <person name="Goldsmith A.D."/>
            <person name="Gurjal M."/>
            <person name="Hansen N.F."/>
            <person name="Hayashizaki Y."/>
            <person name="Johnson-Hopson C."/>
            <person name="Hsuan V.W."/>
            <person name="Iida K."/>
            <person name="Karnes M."/>
            <person name="Khan S."/>
            <person name="Koesema E."/>
            <person name="Ishida J."/>
            <person name="Jiang P.X."/>
            <person name="Jones T."/>
            <person name="Kawai J."/>
            <person name="Kamiya A."/>
            <person name="Meyers C."/>
            <person name="Nakajima M."/>
            <person name="Narusaka M."/>
            <person name="Seki M."/>
            <person name="Sakurai T."/>
            <person name="Satou M."/>
            <person name="Tamse R."/>
            <person name="Vaysberg M."/>
            <person name="Wallender E.K."/>
            <person name="Wong C."/>
            <person name="Yamamura Y."/>
            <person name="Yuan S."/>
            <person name="Shinozaki K."/>
            <person name="Davis R.W."/>
            <person name="Theologis A."/>
            <person name="Ecker J.R."/>
        </authorList>
    </citation>
    <scope>NUCLEOTIDE SEQUENCE [LARGE SCALE MRNA]</scope>
    <source>
        <strain>cv. Columbia</strain>
    </source>
</reference>
<reference key="4">
    <citation type="journal article" date="2009" name="DNA Res.">
        <title>Analysis of multiple occurrences of alternative splicing events in Arabidopsis thaliana using novel sequenced full-length cDNAs.</title>
        <authorList>
            <person name="Iida K."/>
            <person name="Fukami-Kobayashi K."/>
            <person name="Toyoda A."/>
            <person name="Sakaki Y."/>
            <person name="Kobayashi M."/>
            <person name="Seki M."/>
            <person name="Shinozaki K."/>
        </authorList>
    </citation>
    <scope>NUCLEOTIDE SEQUENCE [LARGE SCALE MRNA]</scope>
    <source>
        <strain>cv. Columbia</strain>
        <tissue>Flower</tissue>
        <tissue>Silique</tissue>
    </source>
</reference>
<reference key="5">
    <citation type="submission" date="2002-03" db="EMBL/GenBank/DDBJ databases">
        <title>Full-length cDNA from Arabidopsis thaliana.</title>
        <authorList>
            <person name="Brover V.V."/>
            <person name="Troukhan M.E."/>
            <person name="Alexandrov N.A."/>
            <person name="Lu Y.-P."/>
            <person name="Flavell R.B."/>
            <person name="Feldmann K.A."/>
        </authorList>
    </citation>
    <scope>NUCLEOTIDE SEQUENCE [LARGE SCALE MRNA]</scope>
</reference>
<reference key="6">
    <citation type="journal article" date="2012" name="Plant Physiol.">
        <title>The functional network of the Arabidopsis plastoglobule proteome based on quantitative proteomics and genome-wide coexpression analysis.</title>
        <authorList>
            <person name="Lundquist P.K."/>
            <person name="Poliakov A."/>
            <person name="Bhuiyan N.H."/>
            <person name="Zybailov B."/>
            <person name="Sun Q."/>
            <person name="van Wijk K.J."/>
        </authorList>
    </citation>
    <scope>IDENTIFICATION BY MASS SPECTROMETRY</scope>
    <scope>SUBCELLULAR LOCATION [LARGE SCALE ANALYSIS]</scope>
    <source>
        <strain>cv. Columbia</strain>
    </source>
</reference>
<reference key="7">
    <citation type="journal article" date="2012" name="Trends Plant Sci.">
        <title>ABC1K atypical kinases in plants: filling the organellar kinase void.</title>
        <authorList>
            <person name="Lundquist P.K."/>
            <person name="Davis J.I."/>
            <person name="van Wijk K.J."/>
        </authorList>
    </citation>
    <scope>SUBCELLULAR LOCATION</scope>
    <scope>GENE FAMILY</scope>
    <scope>NOMENCLATURE</scope>
</reference>
<reference key="8">
    <citation type="journal article" date="2014" name="New Phytol.">
        <title>AtSIA1 and AtOSA1: two Abc1 proteins involved in oxidative stress responses and iron distribution within chloroplasts.</title>
        <authorList>
            <person name="Manara A."/>
            <person name="DalCorso G."/>
            <person name="Leister D."/>
            <person name="Jahns P."/>
            <person name="Baldan B."/>
            <person name="Furini A."/>
        </authorList>
    </citation>
    <scope>FUNCTION</scope>
    <scope>DISRUPTION PHENOTYPE</scope>
    <scope>TISSUE SPECIFICITY</scope>
    <scope>SUBCELLULAR LOCATION</scope>
    <scope>RESPONSE TO IRON DEPRIVATION</scope>
    <source>
        <strain>cv. Columbia</strain>
    </source>
</reference>
<reference key="9">
    <citation type="journal article" date="2015" name="Plant Cell Physiol.">
        <title>Loss of the atypical kinases ABC1K7 and ABC1K8 changes the lipid composition of the chloroplast membrane.</title>
        <authorList>
            <person name="Manara A."/>
            <person name="DalCorso G."/>
            <person name="Guzzo F."/>
            <person name="Furini A."/>
        </authorList>
    </citation>
    <scope>FUNCTION</scope>
    <scope>DISRUPTION PHENOTYPE</scope>
    <source>
        <strain>cv. Columbia</strain>
    </source>
</reference>
<gene>
    <name evidence="7" type="primary">ABC1K7</name>
    <name evidence="8" type="synonym">SIA1</name>
    <name evidence="11" type="ordered locus">At3g07700</name>
    <name evidence="13" type="ORF">F17A17.4</name>
    <name evidence="12" type="ORF">MLP3.15</name>
</gene>
<keyword id="KW-0067">ATP-binding</keyword>
<keyword id="KW-0150">Chloroplast</keyword>
<keyword id="KW-0418">Kinase</keyword>
<keyword id="KW-0443">Lipid metabolism</keyword>
<keyword id="KW-0472">Membrane</keyword>
<keyword id="KW-0547">Nucleotide-binding</keyword>
<keyword id="KW-0934">Plastid</keyword>
<keyword id="KW-1185">Reference proteome</keyword>
<keyword id="KW-0346">Stress response</keyword>
<keyword id="KW-0793">Thylakoid</keyword>
<keyword id="KW-0808">Transferase</keyword>
<keyword id="KW-0809">Transit peptide</keyword>
<keyword id="KW-0812">Transmembrane</keyword>
<keyword id="KW-1133">Transmembrane helix</keyword>
<accession>B9DGY1</accession>
<accession>Q8L8V3</accession>
<accession>Q8RXL3</accession>
<accession>Q93ZL4</accession>
<accession>Q9SFD6</accession>
<accession>Q9SSE3</accession>